<feature type="chain" id="PRO_0000123808" description="Uncharacterized transporter C5D6.04">
    <location>
        <begin position="1"/>
        <end position="452"/>
    </location>
</feature>
<feature type="transmembrane region" description="Helical" evidence="1">
    <location>
        <begin position="18"/>
        <end position="38"/>
    </location>
</feature>
<feature type="transmembrane region" description="Helical" evidence="1">
    <location>
        <begin position="81"/>
        <end position="101"/>
    </location>
</feature>
<feature type="transmembrane region" description="Helical" evidence="1">
    <location>
        <begin position="269"/>
        <end position="289"/>
    </location>
</feature>
<feature type="transmembrane region" description="Helical" evidence="1">
    <location>
        <begin position="317"/>
        <end position="337"/>
    </location>
</feature>
<feature type="transmembrane region" description="Helical" evidence="1">
    <location>
        <begin position="354"/>
        <end position="374"/>
    </location>
</feature>
<feature type="transmembrane region" description="Helical" evidence="1">
    <location>
        <begin position="390"/>
        <end position="410"/>
    </location>
</feature>
<feature type="transmembrane region" description="Helical" evidence="1">
    <location>
        <begin position="428"/>
        <end position="448"/>
    </location>
</feature>
<sequence length="452" mass="49576">MGFFSSLGQINVWSLLRPIIESDLEVIVIALGGYVLAKKGFLPRDAQKVISSLNVYFFTPCLVFEKVGNGLNLKMLIDLSLLPVFYVIISAASILISFLLAKLFRLTPRQRNFATACITFQNSNSLPLALVSSLATTVKDLLWDKIPDDTPDKVASRGIMYLLIFSQLGQALRWSYGYRILLSPNQPEDPLPIGNRSWSHSDVNEEEIQNLLASSANVDGVQNSVQANEGSTVQTDSSAISKNDNVQVETSNEEVGGFGAASSKISKFIVLLLDFFSPPLYSLFIALFIAVVPPLQRFFFEEGSFVEGSITSGIRMAGQVAVPMILVVLGASLATDISKTEPTQEVRKNNDTRVIIVCLLGRMVVVPLALLPAFSLLSYFSEISTVDDPVFVVVIFLLVGSPTAIQLTQICQLNGVFERECAKVLWWSYAVFTPPNSLLLAFASLLVVKWTK</sequence>
<comment type="subcellular location">
    <subcellularLocation>
        <location evidence="2">Membrane</location>
        <topology evidence="2">Multi-pass membrane protein</topology>
    </subcellularLocation>
</comment>
<comment type="similarity">
    <text evidence="2">Belongs to the auxin efflux carrier (TC 2.A.69) family.</text>
</comment>
<evidence type="ECO:0000255" key="1"/>
<evidence type="ECO:0000305" key="2"/>
<gene>
    <name type="ORF">SPAC5D6.04</name>
</gene>
<reference key="1">
    <citation type="journal article" date="2002" name="Nature">
        <title>The genome sequence of Schizosaccharomyces pombe.</title>
        <authorList>
            <person name="Wood V."/>
            <person name="Gwilliam R."/>
            <person name="Rajandream M.A."/>
            <person name="Lyne M.H."/>
            <person name="Lyne R."/>
            <person name="Stewart A."/>
            <person name="Sgouros J.G."/>
            <person name="Peat N."/>
            <person name="Hayles J."/>
            <person name="Baker S.G."/>
            <person name="Basham D."/>
            <person name="Bowman S."/>
            <person name="Brooks K."/>
            <person name="Brown D."/>
            <person name="Brown S."/>
            <person name="Chillingworth T."/>
            <person name="Churcher C.M."/>
            <person name="Collins M."/>
            <person name="Connor R."/>
            <person name="Cronin A."/>
            <person name="Davis P."/>
            <person name="Feltwell T."/>
            <person name="Fraser A."/>
            <person name="Gentles S."/>
            <person name="Goble A."/>
            <person name="Hamlin N."/>
            <person name="Harris D.E."/>
            <person name="Hidalgo J."/>
            <person name="Hodgson G."/>
            <person name="Holroyd S."/>
            <person name="Hornsby T."/>
            <person name="Howarth S."/>
            <person name="Huckle E.J."/>
            <person name="Hunt S."/>
            <person name="Jagels K."/>
            <person name="James K.D."/>
            <person name="Jones L."/>
            <person name="Jones M."/>
            <person name="Leather S."/>
            <person name="McDonald S."/>
            <person name="McLean J."/>
            <person name="Mooney P."/>
            <person name="Moule S."/>
            <person name="Mungall K.L."/>
            <person name="Murphy L.D."/>
            <person name="Niblett D."/>
            <person name="Odell C."/>
            <person name="Oliver K."/>
            <person name="O'Neil S."/>
            <person name="Pearson D."/>
            <person name="Quail M.A."/>
            <person name="Rabbinowitsch E."/>
            <person name="Rutherford K.M."/>
            <person name="Rutter S."/>
            <person name="Saunders D."/>
            <person name="Seeger K."/>
            <person name="Sharp S."/>
            <person name="Skelton J."/>
            <person name="Simmonds M.N."/>
            <person name="Squares R."/>
            <person name="Squares S."/>
            <person name="Stevens K."/>
            <person name="Taylor K."/>
            <person name="Taylor R.G."/>
            <person name="Tivey A."/>
            <person name="Walsh S.V."/>
            <person name="Warren T."/>
            <person name="Whitehead S."/>
            <person name="Woodward J.R."/>
            <person name="Volckaert G."/>
            <person name="Aert R."/>
            <person name="Robben J."/>
            <person name="Grymonprez B."/>
            <person name="Weltjens I."/>
            <person name="Vanstreels E."/>
            <person name="Rieger M."/>
            <person name="Schaefer M."/>
            <person name="Mueller-Auer S."/>
            <person name="Gabel C."/>
            <person name="Fuchs M."/>
            <person name="Duesterhoeft A."/>
            <person name="Fritzc C."/>
            <person name="Holzer E."/>
            <person name="Moestl D."/>
            <person name="Hilbert H."/>
            <person name="Borzym K."/>
            <person name="Langer I."/>
            <person name="Beck A."/>
            <person name="Lehrach H."/>
            <person name="Reinhardt R."/>
            <person name="Pohl T.M."/>
            <person name="Eger P."/>
            <person name="Zimmermann W."/>
            <person name="Wedler H."/>
            <person name="Wambutt R."/>
            <person name="Purnelle B."/>
            <person name="Goffeau A."/>
            <person name="Cadieu E."/>
            <person name="Dreano S."/>
            <person name="Gloux S."/>
            <person name="Lelaure V."/>
            <person name="Mottier S."/>
            <person name="Galibert F."/>
            <person name="Aves S.J."/>
            <person name="Xiang Z."/>
            <person name="Hunt C."/>
            <person name="Moore K."/>
            <person name="Hurst S.M."/>
            <person name="Lucas M."/>
            <person name="Rochet M."/>
            <person name="Gaillardin C."/>
            <person name="Tallada V.A."/>
            <person name="Garzon A."/>
            <person name="Thode G."/>
            <person name="Daga R.R."/>
            <person name="Cruzado L."/>
            <person name="Jimenez J."/>
            <person name="Sanchez M."/>
            <person name="del Rey F."/>
            <person name="Benito J."/>
            <person name="Dominguez A."/>
            <person name="Revuelta J.L."/>
            <person name="Moreno S."/>
            <person name="Armstrong J."/>
            <person name="Forsburg S.L."/>
            <person name="Cerutti L."/>
            <person name="Lowe T."/>
            <person name="McCombie W.R."/>
            <person name="Paulsen I."/>
            <person name="Potashkin J."/>
            <person name="Shpakovski G.V."/>
            <person name="Ussery D."/>
            <person name="Barrell B.G."/>
            <person name="Nurse P."/>
        </authorList>
    </citation>
    <scope>NUCLEOTIDE SEQUENCE [LARGE SCALE GENOMIC DNA]</scope>
    <source>
        <strain>972 / ATCC 24843</strain>
    </source>
</reference>
<proteinExistence type="inferred from homology"/>
<organism>
    <name type="scientific">Schizosaccharomyces pombe (strain 972 / ATCC 24843)</name>
    <name type="common">Fission yeast</name>
    <dbReference type="NCBI Taxonomy" id="284812"/>
    <lineage>
        <taxon>Eukaryota</taxon>
        <taxon>Fungi</taxon>
        <taxon>Dikarya</taxon>
        <taxon>Ascomycota</taxon>
        <taxon>Taphrinomycotina</taxon>
        <taxon>Schizosaccharomycetes</taxon>
        <taxon>Schizosaccharomycetales</taxon>
        <taxon>Schizosaccharomycetaceae</taxon>
        <taxon>Schizosaccharomyces</taxon>
    </lineage>
</organism>
<dbReference type="EMBL" id="CU329670">
    <property type="protein sequence ID" value="CAB10852.1"/>
    <property type="molecule type" value="Genomic_DNA"/>
</dbReference>
<dbReference type="PIR" id="T38962">
    <property type="entry name" value="T38962"/>
</dbReference>
<dbReference type="RefSeq" id="NP_593365.1">
    <property type="nucleotide sequence ID" value="NM_001018797.2"/>
</dbReference>
<dbReference type="BioGRID" id="278442">
    <property type="interactions" value="13"/>
</dbReference>
<dbReference type="FunCoup" id="O14197">
    <property type="interactions" value="36"/>
</dbReference>
<dbReference type="STRING" id="284812.O14197"/>
<dbReference type="PaxDb" id="4896-SPAC5D6.04.1"/>
<dbReference type="EnsemblFungi" id="SPAC5D6.04.1">
    <property type="protein sequence ID" value="SPAC5D6.04.1:pep"/>
    <property type="gene ID" value="SPAC5D6.04"/>
</dbReference>
<dbReference type="KEGG" id="spo:2541955"/>
<dbReference type="PomBase" id="SPAC5D6.04"/>
<dbReference type="VEuPathDB" id="FungiDB:SPAC5D6.04"/>
<dbReference type="eggNOG" id="KOG2722">
    <property type="taxonomic scope" value="Eukaryota"/>
</dbReference>
<dbReference type="HOGENOM" id="CLU_026460_2_0_1"/>
<dbReference type="InParanoid" id="O14197"/>
<dbReference type="OMA" id="WSWGYHI"/>
<dbReference type="PhylomeDB" id="O14197"/>
<dbReference type="PRO" id="PR:O14197"/>
<dbReference type="Proteomes" id="UP000002485">
    <property type="component" value="Chromosome I"/>
</dbReference>
<dbReference type="GO" id="GO:0005783">
    <property type="term" value="C:endoplasmic reticulum"/>
    <property type="evidence" value="ECO:0007005"/>
    <property type="project" value="PomBase"/>
</dbReference>
<dbReference type="GO" id="GO:0016020">
    <property type="term" value="C:membrane"/>
    <property type="evidence" value="ECO:0000255"/>
    <property type="project" value="PomBase"/>
</dbReference>
<dbReference type="GO" id="GO:0022857">
    <property type="term" value="F:transmembrane transporter activity"/>
    <property type="evidence" value="ECO:0000255"/>
    <property type="project" value="PomBase"/>
</dbReference>
<dbReference type="InterPro" id="IPR004776">
    <property type="entry name" value="Mem_transp_PIN-like"/>
</dbReference>
<dbReference type="PANTHER" id="PTHR31794">
    <property type="entry name" value="AUXIN EFFLUX TRANSPORTER FAMILY PROTEIN (EUROFUNG)"/>
    <property type="match status" value="1"/>
</dbReference>
<dbReference type="PANTHER" id="PTHR31794:SF2">
    <property type="entry name" value="AUXIN EFFLUX TRANSPORTER FAMILY PROTEIN (EUROFUNG)"/>
    <property type="match status" value="1"/>
</dbReference>
<dbReference type="Pfam" id="PF03547">
    <property type="entry name" value="Mem_trans"/>
    <property type="match status" value="1"/>
</dbReference>
<accession>O14197</accession>
<name>YDQ4_SCHPO</name>
<keyword id="KW-0472">Membrane</keyword>
<keyword id="KW-1185">Reference proteome</keyword>
<keyword id="KW-0812">Transmembrane</keyword>
<keyword id="KW-1133">Transmembrane helix</keyword>
<keyword id="KW-0813">Transport</keyword>
<protein>
    <recommendedName>
        <fullName>Uncharacterized transporter C5D6.04</fullName>
    </recommendedName>
</protein>